<proteinExistence type="evidence at protein level"/>
<comment type="function">
    <text evidence="5">Key enzyme in purine degradation. Catalyzes the oxidation of hypoxanthine to xanthine. Catalyzes the oxidation of xanthine to uric acid. Oxidizes xanthine, hypoxanthine and pterine at high rates. Can also act on purine and guanine.</text>
</comment>
<comment type="catalytic activity">
    <reaction evidence="5">
        <text>hypoxanthine + NAD(+) + H2O = xanthine + NADH + H(+)</text>
        <dbReference type="Rhea" id="RHEA:24670"/>
        <dbReference type="ChEBI" id="CHEBI:15377"/>
        <dbReference type="ChEBI" id="CHEBI:15378"/>
        <dbReference type="ChEBI" id="CHEBI:17368"/>
        <dbReference type="ChEBI" id="CHEBI:17712"/>
        <dbReference type="ChEBI" id="CHEBI:57540"/>
        <dbReference type="ChEBI" id="CHEBI:57945"/>
        <dbReference type="EC" id="1.17.1.4"/>
    </reaction>
</comment>
<comment type="catalytic activity">
    <reaction evidence="5">
        <text>xanthine + NAD(+) + H2O = urate + NADH + H(+)</text>
        <dbReference type="Rhea" id="RHEA:16669"/>
        <dbReference type="ChEBI" id="CHEBI:15377"/>
        <dbReference type="ChEBI" id="CHEBI:15378"/>
        <dbReference type="ChEBI" id="CHEBI:17712"/>
        <dbReference type="ChEBI" id="CHEBI:17775"/>
        <dbReference type="ChEBI" id="CHEBI:57540"/>
        <dbReference type="ChEBI" id="CHEBI:57945"/>
        <dbReference type="EC" id="1.17.1.4"/>
    </reaction>
</comment>
<comment type="cofactor">
    <cofactor evidence="1">
        <name>Mo-molybdopterin</name>
        <dbReference type="ChEBI" id="CHEBI:71302"/>
    </cofactor>
    <text evidence="1">Binds 1 Mo-molybdopterin (Mo-MPT) cofactor per subunit.</text>
</comment>
<comment type="cofactor">
    <cofactor evidence="1">
        <name>[2Fe-2S] cluster</name>
        <dbReference type="ChEBI" id="CHEBI:190135"/>
    </cofactor>
    <text evidence="1">Binds 2 [2Fe-2S] clusters.</text>
</comment>
<comment type="cofactor">
    <cofactor evidence="1">
        <name>FAD</name>
        <dbReference type="ChEBI" id="CHEBI:57692"/>
    </cofactor>
</comment>
<comment type="activity regulation">
    <text evidence="5">Completely inhibited by allopurinol and significantly inhibited by adenine. Inhibited by Fe(2+), Cd(2+) and Zn(2+) and strongly inhibited by Cu(2+). Mg(2+) and Mo(2+) have no effect on activity.</text>
</comment>
<comment type="biophysicochemical properties">
    <kinetics>
        <KM evidence="5">72.8 uM for xanthine in pH 8.5 and at 43 degrees Celsius</KM>
        <KM evidence="5">50.8 uM for hypoxanthine in pH 8.5 and at 43 degrees Celsius</KM>
        <KM evidence="5">162.5 uM for NAD(+) in pH 8.5 and at 43 degrees Celsius</KM>
        <KM evidence="5">208 uM for purine in pH 8.5 and at 43 degrees Celsius</KM>
    </kinetics>
    <phDependence>
        <text evidence="5">Optimum pH is 8.5 in glycine-NaOH. Optimum pH is between 7.5 and 9.5 in potassium phosphate, Tris-HCl and Tris-acetate.</text>
    </phDependence>
    <temperatureDependence>
        <text evidence="5">Optimum temperature is 43 degrees Celsius. Quite stable as loses only 5% of activity in 1 h at 30 degrees Celsius, 12% at 40 degrees Celsius and 25% at 50 degrees Celsius.</text>
    </temperatureDependence>
</comment>
<comment type="pathway">
    <text evidence="5 6">Purine metabolism.</text>
</comment>
<comment type="subunit">
    <text evidence="5 6">Homodimer.</text>
</comment>
<comment type="subcellular location">
    <subcellularLocation>
        <location evidence="5">Cytoplasm</location>
    </subcellularLocation>
</comment>
<comment type="induction">
    <text evidence="5 6">Most efficiently by hypoxanthine. Twice the level of the transcription increase compared with the level due to induction by adenine, which exhibits 10-fold increase from non-induced (PubMed:23773263, PubMed:25513995). Low levels induced by ammonium and nitrate. 43 mmol/l ammonium or nitrate and 2.5 mmol/l adenine together induce only 2- to 3-fold higher levels compared to non-induced level (PubMed:23773263).</text>
</comment>
<comment type="disruption phenotype">
    <text evidence="5">Exhibits less than 1% of the wild-type activity towards xanthine and hypoxanthine under inducible conditions (2.5 mmol/l adenine). No activity after cultivation without inducer.</text>
</comment>
<comment type="biotechnology">
    <text evidence="5 6">This enzyme can be used as a potential additive in the production of low purine content food, which is recommended to people suffering from hyperuricemia that can at worst lead to gout. When used in conjunction with other enzymes of the purine degradation pathway, uric acid concentration is significantly reduced.</text>
</comment>
<comment type="similarity">
    <text evidence="9">Belongs to the xanthine dehydrogenase family.</text>
</comment>
<evidence type="ECO:0000250" key="1">
    <source>
        <dbReference type="UniProtKB" id="P47989"/>
    </source>
</evidence>
<evidence type="ECO:0000250" key="2">
    <source>
        <dbReference type="UniProtKB" id="P80457"/>
    </source>
</evidence>
<evidence type="ECO:0000255" key="3">
    <source>
        <dbReference type="PROSITE-ProRule" id="PRU00465"/>
    </source>
</evidence>
<evidence type="ECO:0000255" key="4">
    <source>
        <dbReference type="PROSITE-ProRule" id="PRU00718"/>
    </source>
</evidence>
<evidence type="ECO:0000269" key="5">
    <source>
    </source>
</evidence>
<evidence type="ECO:0000269" key="6">
    <source>
    </source>
</evidence>
<evidence type="ECO:0000303" key="7">
    <source>
    </source>
</evidence>
<evidence type="ECO:0000303" key="8">
    <source>
    </source>
</evidence>
<evidence type="ECO:0000305" key="9"/>
<evidence type="ECO:0000312" key="10">
    <source>
        <dbReference type="EMBL" id="CCV20080.1"/>
    </source>
</evidence>
<evidence type="ECO:0000312" key="11">
    <source>
        <dbReference type="EMBL" id="CDP37481.1"/>
    </source>
</evidence>
<accession>R4ZGN4</accession>
<dbReference type="EC" id="1.17.1.4" evidence="5"/>
<dbReference type="EMBL" id="HF935016">
    <property type="protein sequence ID" value="CCV20080.1"/>
    <property type="molecule type" value="Genomic_DNA"/>
</dbReference>
<dbReference type="EMBL" id="HG937694">
    <property type="protein sequence ID" value="CDP37481.1"/>
    <property type="molecule type" value="Genomic_DNA"/>
</dbReference>
<dbReference type="SMR" id="R4ZGN4"/>
<dbReference type="PhylomeDB" id="R4ZGN4"/>
<dbReference type="BRENDA" id="1.17.3.2">
    <property type="organism ID" value="468"/>
</dbReference>
<dbReference type="GO" id="GO:0005737">
    <property type="term" value="C:cytoplasm"/>
    <property type="evidence" value="ECO:0000314"/>
    <property type="project" value="UniProtKB"/>
</dbReference>
<dbReference type="GO" id="GO:0051537">
    <property type="term" value="F:2 iron, 2 sulfur cluster binding"/>
    <property type="evidence" value="ECO:0000250"/>
    <property type="project" value="UniProtKB"/>
</dbReference>
<dbReference type="GO" id="GO:0071949">
    <property type="term" value="F:FAD binding"/>
    <property type="evidence" value="ECO:0007669"/>
    <property type="project" value="InterPro"/>
</dbReference>
<dbReference type="GO" id="GO:0050660">
    <property type="term" value="F:flavin adenine dinucleotide binding"/>
    <property type="evidence" value="ECO:0000250"/>
    <property type="project" value="UniProtKB"/>
</dbReference>
<dbReference type="GO" id="GO:0005506">
    <property type="term" value="F:iron ion binding"/>
    <property type="evidence" value="ECO:0007669"/>
    <property type="project" value="InterPro"/>
</dbReference>
<dbReference type="GO" id="GO:0043546">
    <property type="term" value="F:molybdopterin cofactor binding"/>
    <property type="evidence" value="ECO:0000250"/>
    <property type="project" value="UniProtKB"/>
</dbReference>
<dbReference type="GO" id="GO:0042803">
    <property type="term" value="F:protein homodimerization activity"/>
    <property type="evidence" value="ECO:0000314"/>
    <property type="project" value="UniProtKB"/>
</dbReference>
<dbReference type="GO" id="GO:0004854">
    <property type="term" value="F:xanthine dehydrogenase activity"/>
    <property type="evidence" value="ECO:0000314"/>
    <property type="project" value="UniProtKB"/>
</dbReference>
<dbReference type="GO" id="GO:0071242">
    <property type="term" value="P:cellular response to ammonium ion"/>
    <property type="evidence" value="ECO:0000270"/>
    <property type="project" value="UniProtKB"/>
</dbReference>
<dbReference type="GO" id="GO:0071276">
    <property type="term" value="P:cellular response to cadmium ion"/>
    <property type="evidence" value="ECO:0000314"/>
    <property type="project" value="UniProtKB"/>
</dbReference>
<dbReference type="GO" id="GO:0071280">
    <property type="term" value="P:cellular response to copper ion"/>
    <property type="evidence" value="ECO:0000314"/>
    <property type="project" value="UniProtKB"/>
</dbReference>
<dbReference type="GO" id="GO:0071281">
    <property type="term" value="P:cellular response to iron ion"/>
    <property type="evidence" value="ECO:0000314"/>
    <property type="project" value="UniProtKB"/>
</dbReference>
<dbReference type="GO" id="GO:0071249">
    <property type="term" value="P:cellular response to nitrate"/>
    <property type="evidence" value="ECO:0000270"/>
    <property type="project" value="UniProtKB"/>
</dbReference>
<dbReference type="GO" id="GO:0071294">
    <property type="term" value="P:cellular response to zinc ion"/>
    <property type="evidence" value="ECO:0000314"/>
    <property type="project" value="UniProtKB"/>
</dbReference>
<dbReference type="GO" id="GO:0006147">
    <property type="term" value="P:guanine catabolic process"/>
    <property type="evidence" value="ECO:0000314"/>
    <property type="project" value="UniProtKB"/>
</dbReference>
<dbReference type="GO" id="GO:0009114">
    <property type="term" value="P:hypoxanthine catabolic process"/>
    <property type="evidence" value="ECO:0000314"/>
    <property type="project" value="UniProtKB"/>
</dbReference>
<dbReference type="GO" id="GO:0006145">
    <property type="term" value="P:purine nucleobase catabolic process"/>
    <property type="evidence" value="ECO:0000314"/>
    <property type="project" value="UniProtKB"/>
</dbReference>
<dbReference type="GO" id="GO:0009115">
    <property type="term" value="P:xanthine catabolic process"/>
    <property type="evidence" value="ECO:0000314"/>
    <property type="project" value="UniProtKB"/>
</dbReference>
<dbReference type="CDD" id="cd00207">
    <property type="entry name" value="fer2"/>
    <property type="match status" value="1"/>
</dbReference>
<dbReference type="FunFam" id="3.10.20.30:FF:000015">
    <property type="entry name" value="Aldehyde oxidase 1"/>
    <property type="match status" value="1"/>
</dbReference>
<dbReference type="FunFam" id="3.30.365.10:FF:000003">
    <property type="entry name" value="Aldehyde oxidase 1"/>
    <property type="match status" value="1"/>
</dbReference>
<dbReference type="FunFam" id="3.30.365.10:FF:000002">
    <property type="entry name" value="Xanthine dehydrogenase oxidase"/>
    <property type="match status" value="1"/>
</dbReference>
<dbReference type="FunFam" id="3.30.43.10:FF:000001">
    <property type="entry name" value="Xanthine dehydrogenase/oxidase"/>
    <property type="match status" value="1"/>
</dbReference>
<dbReference type="FunFam" id="3.30.465.10:FF:000004">
    <property type="entry name" value="Xanthine dehydrogenase/oxidase"/>
    <property type="match status" value="1"/>
</dbReference>
<dbReference type="Gene3D" id="3.10.20.30">
    <property type="match status" value="1"/>
</dbReference>
<dbReference type="Gene3D" id="3.30.465.10">
    <property type="match status" value="1"/>
</dbReference>
<dbReference type="Gene3D" id="1.10.150.120">
    <property type="entry name" value="[2Fe-2S]-binding domain"/>
    <property type="match status" value="1"/>
</dbReference>
<dbReference type="Gene3D" id="3.90.1170.50">
    <property type="entry name" value="Aldehyde oxidase/xanthine dehydrogenase, a/b hammerhead"/>
    <property type="match status" value="1"/>
</dbReference>
<dbReference type="Gene3D" id="3.30.365.10">
    <property type="entry name" value="Aldehyde oxidase/xanthine dehydrogenase, molybdopterin binding domain"/>
    <property type="match status" value="4"/>
</dbReference>
<dbReference type="Gene3D" id="3.30.390.50">
    <property type="entry name" value="CO dehydrogenase flavoprotein, C-terminal domain"/>
    <property type="match status" value="1"/>
</dbReference>
<dbReference type="Gene3D" id="3.30.43.10">
    <property type="entry name" value="Uridine Diphospho-n-acetylenolpyruvylglucosamine Reductase, domain 2"/>
    <property type="match status" value="1"/>
</dbReference>
<dbReference type="InterPro" id="IPR002888">
    <property type="entry name" value="2Fe-2S-bd"/>
</dbReference>
<dbReference type="InterPro" id="IPR036884">
    <property type="entry name" value="2Fe-2S-bd_dom_sf"/>
</dbReference>
<dbReference type="InterPro" id="IPR036010">
    <property type="entry name" value="2Fe-2S_ferredoxin-like_sf"/>
</dbReference>
<dbReference type="InterPro" id="IPR001041">
    <property type="entry name" value="2Fe-2S_ferredoxin-type"/>
</dbReference>
<dbReference type="InterPro" id="IPR006058">
    <property type="entry name" value="2Fe2S_fd_BS"/>
</dbReference>
<dbReference type="InterPro" id="IPR000674">
    <property type="entry name" value="Ald_Oxase/Xan_DH_a/b"/>
</dbReference>
<dbReference type="InterPro" id="IPR036856">
    <property type="entry name" value="Ald_Oxase/Xan_DH_a/b_sf"/>
</dbReference>
<dbReference type="InterPro" id="IPR016208">
    <property type="entry name" value="Ald_Oxase/xanthine_DH-like"/>
</dbReference>
<dbReference type="InterPro" id="IPR008274">
    <property type="entry name" value="AldOxase/xan_DH_MoCoBD1"/>
</dbReference>
<dbReference type="InterPro" id="IPR046867">
    <property type="entry name" value="AldOxase/xan_DH_MoCoBD2"/>
</dbReference>
<dbReference type="InterPro" id="IPR037165">
    <property type="entry name" value="AldOxase/xan_DH_Mopterin-bd_sf"/>
</dbReference>
<dbReference type="InterPro" id="IPR012675">
    <property type="entry name" value="Beta-grasp_dom_sf"/>
</dbReference>
<dbReference type="InterPro" id="IPR005107">
    <property type="entry name" value="CO_DH_flav_C"/>
</dbReference>
<dbReference type="InterPro" id="IPR036683">
    <property type="entry name" value="CO_DH_flav_C_dom_sf"/>
</dbReference>
<dbReference type="InterPro" id="IPR016166">
    <property type="entry name" value="FAD-bd_PCMH"/>
</dbReference>
<dbReference type="InterPro" id="IPR036318">
    <property type="entry name" value="FAD-bd_PCMH-like_sf"/>
</dbReference>
<dbReference type="InterPro" id="IPR016167">
    <property type="entry name" value="FAD-bd_PCMH_sub1"/>
</dbReference>
<dbReference type="InterPro" id="IPR016169">
    <property type="entry name" value="FAD-bd_PCMH_sub2"/>
</dbReference>
<dbReference type="InterPro" id="IPR002346">
    <property type="entry name" value="Mopterin_DH_FAD-bd"/>
</dbReference>
<dbReference type="PANTHER" id="PTHR45444">
    <property type="entry name" value="XANTHINE DEHYDROGENASE"/>
    <property type="match status" value="1"/>
</dbReference>
<dbReference type="PANTHER" id="PTHR45444:SF3">
    <property type="entry name" value="XANTHINE DEHYDROGENASE"/>
    <property type="match status" value="1"/>
</dbReference>
<dbReference type="Pfam" id="PF01315">
    <property type="entry name" value="Ald_Xan_dh_C"/>
    <property type="match status" value="1"/>
</dbReference>
<dbReference type="Pfam" id="PF03450">
    <property type="entry name" value="CO_deh_flav_C"/>
    <property type="match status" value="1"/>
</dbReference>
<dbReference type="Pfam" id="PF00941">
    <property type="entry name" value="FAD_binding_5"/>
    <property type="match status" value="1"/>
</dbReference>
<dbReference type="Pfam" id="PF00111">
    <property type="entry name" value="Fer2"/>
    <property type="match status" value="1"/>
</dbReference>
<dbReference type="Pfam" id="PF01799">
    <property type="entry name" value="Fer2_2"/>
    <property type="match status" value="1"/>
</dbReference>
<dbReference type="Pfam" id="PF02738">
    <property type="entry name" value="MoCoBD_1"/>
    <property type="match status" value="1"/>
</dbReference>
<dbReference type="Pfam" id="PF20256">
    <property type="entry name" value="MoCoBD_2"/>
    <property type="match status" value="1"/>
</dbReference>
<dbReference type="PIRSF" id="PIRSF000127">
    <property type="entry name" value="Xanthine_DH"/>
    <property type="match status" value="1"/>
</dbReference>
<dbReference type="SMART" id="SM01008">
    <property type="entry name" value="Ald_Xan_dh_C"/>
    <property type="match status" value="1"/>
</dbReference>
<dbReference type="SMART" id="SM01092">
    <property type="entry name" value="CO_deh_flav_C"/>
    <property type="match status" value="1"/>
</dbReference>
<dbReference type="SUPFAM" id="SSF54292">
    <property type="entry name" value="2Fe-2S ferredoxin-like"/>
    <property type="match status" value="1"/>
</dbReference>
<dbReference type="SUPFAM" id="SSF55447">
    <property type="entry name" value="CO dehydrogenase flavoprotein C-terminal domain-like"/>
    <property type="match status" value="1"/>
</dbReference>
<dbReference type="SUPFAM" id="SSF47741">
    <property type="entry name" value="CO dehydrogenase ISP C-domain like"/>
    <property type="match status" value="1"/>
</dbReference>
<dbReference type="SUPFAM" id="SSF54665">
    <property type="entry name" value="CO dehydrogenase molybdoprotein N-domain-like"/>
    <property type="match status" value="1"/>
</dbReference>
<dbReference type="SUPFAM" id="SSF56176">
    <property type="entry name" value="FAD-binding/transporter-associated domain-like"/>
    <property type="match status" value="1"/>
</dbReference>
<dbReference type="SUPFAM" id="SSF56003">
    <property type="entry name" value="Molybdenum cofactor-binding domain"/>
    <property type="match status" value="1"/>
</dbReference>
<dbReference type="PROSITE" id="PS00197">
    <property type="entry name" value="2FE2S_FER_1"/>
    <property type="match status" value="1"/>
</dbReference>
<dbReference type="PROSITE" id="PS51085">
    <property type="entry name" value="2FE2S_FER_2"/>
    <property type="match status" value="1"/>
</dbReference>
<dbReference type="PROSITE" id="PS51387">
    <property type="entry name" value="FAD_PCMH"/>
    <property type="match status" value="1"/>
</dbReference>
<gene>
    <name evidence="7 8" type="primary">AXOR</name>
    <name evidence="11" type="ORF">GNLVRS02_ARAD1D12518g</name>
</gene>
<keyword id="KW-0001">2Fe-2S</keyword>
<keyword id="KW-0963">Cytoplasm</keyword>
<keyword id="KW-0903">Direct protein sequencing</keyword>
<keyword id="KW-0274">FAD</keyword>
<keyword id="KW-0285">Flavoprotein</keyword>
<keyword id="KW-0408">Iron</keyword>
<keyword id="KW-0411">Iron-sulfur</keyword>
<keyword id="KW-0479">Metal-binding</keyword>
<keyword id="KW-0500">Molybdenum</keyword>
<keyword id="KW-0520">NAD</keyword>
<keyword id="KW-0560">Oxidoreductase</keyword>
<keyword id="KW-0659">Purine metabolism</keyword>
<organism evidence="10">
    <name type="scientific">Blastobotrys adeninivorans</name>
    <name type="common">Yeast</name>
    <name type="synonym">Arxula adeninivorans</name>
    <dbReference type="NCBI Taxonomy" id="409370"/>
    <lineage>
        <taxon>Eukaryota</taxon>
        <taxon>Fungi</taxon>
        <taxon>Dikarya</taxon>
        <taxon>Ascomycota</taxon>
        <taxon>Saccharomycotina</taxon>
        <taxon>Dipodascomycetes</taxon>
        <taxon>Dipodascales</taxon>
        <taxon>Trichomonascaceae</taxon>
        <taxon>Blastobotrys</taxon>
    </lineage>
</organism>
<reference evidence="10" key="1">
    <citation type="journal article" date="2013" name="J. Appl. Microbiol.">
        <title>Arxula adeninivorans xanthine oxidoreductase and its application in the production of food with low purine content.</title>
        <authorList>
            <person name="Jankowska D.A."/>
            <person name="Trautwein-Schult A."/>
            <person name="Cordes A."/>
            <person name="Hoferichter P."/>
            <person name="Klein C."/>
            <person name="Bode R."/>
            <person name="Baronian K."/>
            <person name="Kunze G."/>
        </authorList>
    </citation>
    <scope>NUCLEOTIDE SEQUENCE [GENOMIC DNA]</scope>
    <scope>PROTEIN SEQUENCE OF 1-6</scope>
    <scope>FUNCTION</scope>
    <scope>CATALYTIC ACTIVITY</scope>
    <scope>ACTIVITY REGULATION</scope>
    <scope>BIOPHYSICOCHEMICAL PROPERTIES</scope>
    <scope>SUBSTRATE SPECIFICITY</scope>
    <scope>PATHWAY</scope>
    <scope>SUBUNIT</scope>
    <scope>SUBCELLULAR LOCATION</scope>
    <scope>INDUCTION</scope>
    <scope>DISRUPTION PHENOTYPE</scope>
    <scope>BIOTECHNOLOGY</scope>
    <source>
        <strain evidence="10">LS3</strain>
    </source>
</reference>
<reference evidence="11" key="2">
    <citation type="journal article" date="2014" name="Biotechnol. Biofuels">
        <title>The complete genome of Blastobotrys (Arxula) adeninivorans LS3 - a yeast of biotechnological interest.</title>
        <authorList>
            <person name="Kunze G."/>
            <person name="Gaillardin C."/>
            <person name="Czernicka M."/>
            <person name="Durrens P."/>
            <person name="Martin T."/>
            <person name="Boeer E."/>
            <person name="Gabaldon T."/>
            <person name="Cruz J.A."/>
            <person name="Talla E."/>
            <person name="Marck C."/>
            <person name="Goffeau A."/>
            <person name="Barbe V."/>
            <person name="Baret P."/>
            <person name="Baronian K."/>
            <person name="Beier S."/>
            <person name="Bleykasten C."/>
            <person name="Bode R."/>
            <person name="Casaregola S."/>
            <person name="Despons L."/>
            <person name="Fairhead C."/>
            <person name="Giersberg M."/>
            <person name="Gierski P.P."/>
            <person name="Haehnel U."/>
            <person name="Hartmann A."/>
            <person name="Jankowska D."/>
            <person name="Jubin C."/>
            <person name="Jung P."/>
            <person name="Lafontaine I."/>
            <person name="Leh-Louis V."/>
            <person name="Lemaire M."/>
            <person name="Marcet-Houben M."/>
            <person name="Mascher M."/>
            <person name="Morel G."/>
            <person name="Richard G.F."/>
            <person name="Riechen J."/>
            <person name="Sacerdot C."/>
            <person name="Sarkar A."/>
            <person name="Savel G."/>
            <person name="Schacherer J."/>
            <person name="Sherman D.J."/>
            <person name="Stein N."/>
            <person name="Straub M.L."/>
            <person name="Thierry A."/>
            <person name="Trautwein-Schult A."/>
            <person name="Vacherie B."/>
            <person name="Westhof E."/>
            <person name="Worch S."/>
            <person name="Dujon B."/>
            <person name="Souciet J.L."/>
            <person name="Wincker P."/>
            <person name="Scholz U."/>
            <person name="Neuveglise C."/>
        </authorList>
    </citation>
    <scope>NUCLEOTIDE SEQUENCE [LARGE SCALE GENOMIC DNA]</scope>
    <source>
        <strain evidence="11">LS3</strain>
    </source>
</reference>
<reference key="3">
    <citation type="journal article" date="2015" name="Bioengineered">
        <title>A novel enzymatic approach in the production of food with low purine content using Arxula adeninivorans endogenous and recombinant purine degradative enzymes.</title>
        <authorList>
            <person name="Jankowska D.A."/>
            <person name="Trautwein-Schult A."/>
            <person name="Cordes A."/>
            <person name="Bode R."/>
            <person name="Baronian K."/>
            <person name="Kunze G."/>
        </authorList>
    </citation>
    <scope>PATHWAY</scope>
    <scope>SUBUNIT</scope>
    <scope>INDUCTION</scope>
    <scope>BIOTECHNOLOGY</scope>
</reference>
<sequence>MVDLQLHQSLGHHNFTNKLTFYVNGVKRTISNPDPRGTLLDFIRTHEGLTGTKLGCSEGGCGACTVVVASWDREQGEIIYSAVNSCIVPLVAVEGKHLITVEGIGSSNNPHPAQERIALFHGSQCGFCTPGIVMSLYALLRNTGGQPSKEQIAESFDGNLCRCTGYKPIIDAANTFSCGRPGGCCRDNASGKANGAGATVGNGMANGAAAVANGNGAAANGCCKGNGAANGCCKSNGSAATTANGDDKEVDMNKLFTPNGLPLKPYSAKTELIFPPALKKYELNPLFFGNEQKVWFRPVTKLQLLQIKHAYPESKIVGGASEIQIEIKMKAANYNISVYANDIEELKTHKYIPGKGLEFGANISLSKLEEVCDKLVHELDPNVSQIYGAILEQLKYFAGRQIRNAATPAGNIATASPISDLNPVLVAAEAVLTVESIENGEEQISMTDFFVGYRKTKLPAHGVITKIFVPETVPRNEVVMAYKQAKRKDDDIAIVTACLRLALDDDFRISKARLAYGGVGPFTTAAKGTAEFLTGKLLRRETAKEVLEGAIDCLIKEFDLPYSVPGGMAAYRRTLIMSFFYKFYSTVLEKIGLAGEAQDNSALENTYDPQALLEVTRKHPVGSRDLTNPYEQRIVGKSDPHLSALKQVTGEAVYIDDIPPYHGECFGVQVMSTKPRARILSVDPSPALEVEGVVGYVDVNDLPSREANIWGPTPVGKEPFFADGEVYYVGQCIGVIIATDRMIAEEAARLVKVEYEELETVITIEEAIEAQSFFDYQPKAEKGDVDGAFAESAYTFEGTSRIGSQEHFYLETQGSLVVPEPEDGEMKVYSSSQNPTETQVFVAQATGVPSSRIVARVKRLGGGFGGKESRCCHLSSIAAVAAKKYKRPVRMILSRSEDMLTAGQRHPFVMKWKVGLDKNYKFTALEAKLYANAGWSMDLTKGVIERAVLHAENCYDFPNARIQGIPCRTSVASNTAFRGFGGPQGMFMAECYIYEIADQLGIEPDTLREINYLVPGVSSTPFKQAITEDFTVPDMVKQIKKQSNYDDLRRQVEEFNSKHKWIKRGLAHVPTMFGISFGATFLNQAGALVHIYHDGSILLTHGGTEMGQGLHTKMAMVCAEELKVPLSQVFISETSTNTVPNTSASAASASSDLNGMAVKHACDQLNERLAPYRERLGENATMEQLAHAAYFDRVNLSANGFYKTPDIGFVWGDPNPKPAFFYFTQGCAVAMVEVNTLTGDWSNLRTDIVMDIGRPINQAIDYGQIEGAFVQGQGLFTIEESLWLRNGALFTRGPGAYKIPGFRDIPQEFNVGHLRDRPFKHLKTIHRSKGIGEPPLFLGSSVFFAIRDALSYARRQNLGEATMPAGLVAPMTTERIRMLAGDSLYEHKGKIEPTEGDDKPFFVNA</sequence>
<name>XDH_BLAAD</name>
<protein>
    <recommendedName>
        <fullName evidence="9">Xanthine dehydrogenase</fullName>
        <shortName evidence="1">XD</shortName>
        <ecNumber evidence="5">1.17.1.4</ecNumber>
    </recommendedName>
    <alternativeName>
        <fullName evidence="8 10">Xanthine oxidoreductase</fullName>
        <shortName evidence="7 8">Axorp</shortName>
        <shortName evidence="7">XOR</shortName>
    </alternativeName>
</protein>
<feature type="chain" id="PRO_0000434943" description="Xanthine dehydrogenase">
    <location>
        <begin position="1"/>
        <end position="1405"/>
    </location>
</feature>
<feature type="domain" description="2Fe-2S ferredoxin-type" evidence="3">
    <location>
        <begin position="17"/>
        <end position="104"/>
    </location>
</feature>
<feature type="domain" description="FAD-binding PCMH-type" evidence="4">
    <location>
        <begin position="288"/>
        <end position="474"/>
    </location>
</feature>
<feature type="active site" description="Proton acceptor" evidence="1">
    <location>
        <position position="1333"/>
    </location>
</feature>
<feature type="binding site" evidence="1 3">
    <location>
        <position position="56"/>
    </location>
    <ligand>
        <name>[2Fe-2S] cluster</name>
        <dbReference type="ChEBI" id="CHEBI:190135"/>
        <label>1</label>
    </ligand>
</feature>
<feature type="binding site" evidence="1 3">
    <location>
        <position position="61"/>
    </location>
    <ligand>
        <name>[2Fe-2S] cluster</name>
        <dbReference type="ChEBI" id="CHEBI:190135"/>
        <label>1</label>
    </ligand>
</feature>
<feature type="binding site" evidence="1 3">
    <location>
        <position position="64"/>
    </location>
    <ligand>
        <name>[2Fe-2S] cluster</name>
        <dbReference type="ChEBI" id="CHEBI:190135"/>
        <label>1</label>
    </ligand>
</feature>
<feature type="binding site" evidence="1 3">
    <location>
        <position position="86"/>
    </location>
    <ligand>
        <name>[2Fe-2S] cluster</name>
        <dbReference type="ChEBI" id="CHEBI:190135"/>
        <label>1</label>
    </ligand>
</feature>
<feature type="binding site" evidence="1">
    <location>
        <position position="125"/>
    </location>
    <ligand>
        <name>[2Fe-2S] cluster</name>
        <dbReference type="ChEBI" id="CHEBI:190135"/>
        <label>2</label>
    </ligand>
</feature>
<feature type="binding site" evidence="1">
    <location>
        <position position="128"/>
    </location>
    <ligand>
        <name>[2Fe-2S] cluster</name>
        <dbReference type="ChEBI" id="CHEBI:190135"/>
        <label>2</label>
    </ligand>
</feature>
<feature type="binding site" evidence="1">
    <location>
        <position position="161"/>
    </location>
    <ligand>
        <name>[2Fe-2S] cluster</name>
        <dbReference type="ChEBI" id="CHEBI:190135"/>
        <label>2</label>
    </ligand>
</feature>
<feature type="binding site" evidence="1">
    <location>
        <position position="163"/>
    </location>
    <ligand>
        <name>[2Fe-2S] cluster</name>
        <dbReference type="ChEBI" id="CHEBI:190135"/>
        <label>2</label>
    </ligand>
</feature>
<feature type="binding site" evidence="1">
    <location>
        <begin position="316"/>
        <end position="323"/>
    </location>
    <ligand>
        <name>FAD</name>
        <dbReference type="ChEBI" id="CHEBI:57692"/>
    </ligand>
</feature>
<feature type="binding site" evidence="1">
    <location>
        <position position="397"/>
    </location>
    <ligand>
        <name>FAD</name>
        <dbReference type="ChEBI" id="CHEBI:57692"/>
    </ligand>
</feature>
<feature type="binding site" evidence="1">
    <location>
        <begin position="407"/>
        <end position="411"/>
    </location>
    <ligand>
        <name>FAD</name>
        <dbReference type="ChEBI" id="CHEBI:57692"/>
    </ligand>
</feature>
<feature type="binding site" evidence="1">
    <location>
        <position position="420"/>
    </location>
    <ligand>
        <name>FAD</name>
        <dbReference type="ChEBI" id="CHEBI:57692"/>
    </ligand>
</feature>
<feature type="binding site" evidence="2">
    <location>
        <position position="464"/>
    </location>
    <ligand>
        <name>FAD</name>
        <dbReference type="ChEBI" id="CHEBI:57692"/>
    </ligand>
</feature>
<feature type="binding site" evidence="1">
    <location>
        <position position="483"/>
    </location>
    <ligand>
        <name>FAD</name>
        <dbReference type="ChEBI" id="CHEBI:57692"/>
    </ligand>
</feature>
<feature type="binding site" evidence="1">
    <location>
        <position position="833"/>
    </location>
    <ligand>
        <name>Mo-molybdopterin</name>
        <dbReference type="ChEBI" id="CHEBI:71302"/>
    </ligand>
    <ligandPart>
        <name>Mo</name>
        <dbReference type="ChEBI" id="CHEBI:28685"/>
    </ligandPart>
</feature>
<feature type="binding site" evidence="1">
    <location>
        <position position="864"/>
    </location>
    <ligand>
        <name>Mo-molybdopterin</name>
        <dbReference type="ChEBI" id="CHEBI:71302"/>
    </ligand>
    <ligandPart>
        <name>Mo</name>
        <dbReference type="ChEBI" id="CHEBI:28685"/>
    </ligandPart>
</feature>
<feature type="binding site" evidence="2">
    <location>
        <position position="868"/>
    </location>
    <ligand>
        <name>substrate</name>
    </ligand>
</feature>
<feature type="binding site" evidence="1">
    <location>
        <position position="946"/>
    </location>
    <ligand>
        <name>substrate</name>
    </ligand>
</feature>
<feature type="binding site" evidence="1">
    <location>
        <position position="978"/>
    </location>
    <ligand>
        <name>Mo-molybdopterin</name>
        <dbReference type="ChEBI" id="CHEBI:71302"/>
    </ligand>
    <ligandPart>
        <name>Mo</name>
        <dbReference type="ChEBI" id="CHEBI:28685"/>
    </ligandPart>
</feature>
<feature type="binding site" evidence="2">
    <location>
        <position position="980"/>
    </location>
    <ligand>
        <name>substrate</name>
    </ligand>
</feature>
<feature type="binding site" evidence="1">
    <location>
        <position position="1147"/>
    </location>
    <ligand>
        <name>Mo-molybdopterin</name>
        <dbReference type="ChEBI" id="CHEBI:71302"/>
    </ligand>
    <ligandPart>
        <name>Mo</name>
        <dbReference type="ChEBI" id="CHEBI:28685"/>
    </ligandPart>
</feature>